<name>ASPGP_PYRFU</name>
<reference key="1">
    <citation type="journal article" date="1999" name="Genetics">
        <title>Divergence of the hyperthermophilic archaea Pyrococcus furiosus and P. horikoshii inferred from complete genomic sequences.</title>
        <authorList>
            <person name="Maeder D.L."/>
            <person name="Weiss R.B."/>
            <person name="Dunn D.M."/>
            <person name="Cherry J.L."/>
            <person name="Gonzalez J.M."/>
            <person name="DiRuggiero J."/>
            <person name="Robb F.T."/>
        </authorList>
    </citation>
    <scope>NUCLEOTIDE SEQUENCE [LARGE SCALE GENOMIC DNA]</scope>
    <source>
        <strain>ATCC 43587 / DSM 3638 / JCM 8422 / Vc1</strain>
    </source>
</reference>
<dbReference type="EC" id="3.5.1.1" evidence="2"/>
<dbReference type="EMBL" id="AE009950">
    <property type="protein sequence ID" value="AAL80266.1"/>
    <property type="molecule type" value="Genomic_DNA"/>
</dbReference>
<dbReference type="RefSeq" id="WP_011011255.1">
    <property type="nucleotide sequence ID" value="NZ_CP023154.1"/>
</dbReference>
<dbReference type="SMR" id="Q8U4E6"/>
<dbReference type="IntAct" id="Q8U4E6">
    <property type="interactions" value="1"/>
</dbReference>
<dbReference type="MINT" id="Q8U4E6"/>
<dbReference type="STRING" id="186497.PF0142"/>
<dbReference type="MEROPS" id="T02.002"/>
<dbReference type="PaxDb" id="186497-PF0142"/>
<dbReference type="KEGG" id="pfu:PF0142"/>
<dbReference type="PATRIC" id="fig|186497.12.peg.148"/>
<dbReference type="eggNOG" id="arCOG04779">
    <property type="taxonomic scope" value="Archaea"/>
</dbReference>
<dbReference type="HOGENOM" id="CLU_021603_1_2_2"/>
<dbReference type="OrthoDB" id="18230at2157"/>
<dbReference type="PhylomeDB" id="Q8U4E6"/>
<dbReference type="Proteomes" id="UP000001013">
    <property type="component" value="Chromosome"/>
</dbReference>
<dbReference type="GO" id="GO:0005737">
    <property type="term" value="C:cytoplasm"/>
    <property type="evidence" value="ECO:0007669"/>
    <property type="project" value="TreeGrafter"/>
</dbReference>
<dbReference type="GO" id="GO:0004067">
    <property type="term" value="F:asparaginase activity"/>
    <property type="evidence" value="ECO:0007669"/>
    <property type="project" value="UniProtKB-EC"/>
</dbReference>
<dbReference type="GO" id="GO:0008233">
    <property type="term" value="F:peptidase activity"/>
    <property type="evidence" value="ECO:0007669"/>
    <property type="project" value="UniProtKB-KW"/>
</dbReference>
<dbReference type="GO" id="GO:0006508">
    <property type="term" value="P:proteolysis"/>
    <property type="evidence" value="ECO:0007669"/>
    <property type="project" value="UniProtKB-KW"/>
</dbReference>
<dbReference type="CDD" id="cd04512">
    <property type="entry name" value="Ntn_Asparaginase_2_like"/>
    <property type="match status" value="1"/>
</dbReference>
<dbReference type="FunFam" id="3.60.20.30:FF:000001">
    <property type="entry name" value="Isoaspartyl peptidase/L-asparaginase"/>
    <property type="match status" value="1"/>
</dbReference>
<dbReference type="Gene3D" id="3.60.20.30">
    <property type="entry name" value="(Glycosyl)asparaginase"/>
    <property type="match status" value="1"/>
</dbReference>
<dbReference type="InterPro" id="IPR029055">
    <property type="entry name" value="Ntn_hydrolases_N"/>
</dbReference>
<dbReference type="InterPro" id="IPR000246">
    <property type="entry name" value="Peptidase_T2"/>
</dbReference>
<dbReference type="PANTHER" id="PTHR10188">
    <property type="entry name" value="L-ASPARAGINASE"/>
    <property type="match status" value="1"/>
</dbReference>
<dbReference type="PANTHER" id="PTHR10188:SF6">
    <property type="entry name" value="N(4)-(BETA-N-ACETYLGLUCOSAMINYL)-L-ASPARAGINASE"/>
    <property type="match status" value="1"/>
</dbReference>
<dbReference type="Pfam" id="PF01112">
    <property type="entry name" value="Asparaginase_2"/>
    <property type="match status" value="1"/>
</dbReference>
<dbReference type="SUPFAM" id="SSF56235">
    <property type="entry name" value="N-terminal nucleophile aminohydrolases (Ntn hydrolases)"/>
    <property type="match status" value="1"/>
</dbReference>
<accession>Q8U4E6</accession>
<keyword id="KW-0068">Autocatalytic cleavage</keyword>
<keyword id="KW-0378">Hydrolase</keyword>
<keyword id="KW-0645">Protease</keyword>
<keyword id="KW-1185">Reference proteome</keyword>
<gene>
    <name type="ordered locus">PF0142</name>
</gene>
<comment type="function">
    <text evidence="2">Catalyzes the hydrolysis of L-asparagine into L-aspartate and ammonia.</text>
</comment>
<comment type="catalytic activity">
    <reaction evidence="2">
        <text>L-asparagine + H2O = L-aspartate + NH4(+)</text>
        <dbReference type="Rhea" id="RHEA:21016"/>
        <dbReference type="ChEBI" id="CHEBI:15377"/>
        <dbReference type="ChEBI" id="CHEBI:28938"/>
        <dbReference type="ChEBI" id="CHEBI:29991"/>
        <dbReference type="ChEBI" id="CHEBI:58048"/>
        <dbReference type="EC" id="3.5.1.1"/>
    </reaction>
</comment>
<comment type="subunit">
    <text evidence="1">Heterotetramer of two alpha and two beta chains arranged as a dimer of alpha/beta heterodimers.</text>
</comment>
<comment type="PTM">
    <text evidence="2">Autocleaved (By similarity). Generates the alpha and beta subunits (By similarity). The N-terminal residue of the beta subunit is thought to be responsible for the nucleophile hydrolase activity (By similarity).</text>
</comment>
<comment type="similarity">
    <text evidence="3">Belongs to the Ntn-hydrolase family.</text>
</comment>
<proteinExistence type="inferred from homology"/>
<evidence type="ECO:0000250" key="1">
    <source>
        <dbReference type="UniProtKB" id="P37595"/>
    </source>
</evidence>
<evidence type="ECO:0000250" key="2">
    <source>
        <dbReference type="UniProtKB" id="Q5JHT1"/>
    </source>
</evidence>
<evidence type="ECO:0000305" key="3"/>
<sequence>MVAIIVHGGAGTIRKEERIPKIIEGVREAVLTGWRELKKGSALDAVEEAVKVLEDNPLFNAGTGSVLTLDGKVEMDAAIMRGKTLDAGAVAGIWGVKNPISVARKVMEKTDHVLLIGEGAVKFARLMGFPEYDPTTEERRKQWEELRKKLLETGEIRHWKKLSELIKEYPEVLRSTVGAVAFDGEEIVAGTSTGGVFLKMFGRVGDTPIIGAGTYANEVAGASCTGLGEVAIKLSLAKTATDFVRLGLDAQAASEAAIRLATKYFGPDTMGIIMVDSNGNVGFAKNTKHMSYAFMKEGMKEPEAGV</sequence>
<protein>
    <recommendedName>
        <fullName evidence="2">Plant-type L-asparaginase</fullName>
        <ecNumber evidence="2">3.5.1.1</ecNumber>
    </recommendedName>
    <alternativeName>
        <fullName evidence="2">L-asparagine amidohydrolase</fullName>
    </alternativeName>
    <component>
        <recommendedName>
            <fullName>L-asparaginase subunit alpha</fullName>
        </recommendedName>
    </component>
    <component>
        <recommendedName>
            <fullName>L-asparaginase subunit beta</fullName>
        </recommendedName>
    </component>
</protein>
<organism>
    <name type="scientific">Pyrococcus furiosus (strain ATCC 43587 / DSM 3638 / JCM 8422 / Vc1)</name>
    <dbReference type="NCBI Taxonomy" id="186497"/>
    <lineage>
        <taxon>Archaea</taxon>
        <taxon>Methanobacteriati</taxon>
        <taxon>Methanobacteriota</taxon>
        <taxon>Thermococci</taxon>
        <taxon>Thermococcales</taxon>
        <taxon>Thermococcaceae</taxon>
        <taxon>Pyrococcus</taxon>
    </lineage>
</organism>
<feature type="chain" id="PRO_0000184580" description="L-asparaginase subunit alpha">
    <location>
        <begin position="1"/>
        <end position="175"/>
    </location>
</feature>
<feature type="chain" id="PRO_0000329017" description="L-asparaginase subunit beta">
    <location>
        <begin position="176"/>
        <end position="306"/>
    </location>
</feature>
<feature type="active site" description="Nucleophile" evidence="1">
    <location>
        <position position="176"/>
    </location>
</feature>
<feature type="binding site" evidence="1">
    <location>
        <begin position="203"/>
        <end position="206"/>
    </location>
    <ligand>
        <name>substrate</name>
    </ligand>
</feature>
<feature type="binding site" evidence="1">
    <location>
        <begin position="225"/>
        <end position="228"/>
    </location>
    <ligand>
        <name>substrate</name>
    </ligand>
</feature>
<feature type="site" description="Cleavage; by autolysis" evidence="1">
    <location>
        <begin position="175"/>
        <end position="176"/>
    </location>
</feature>